<protein>
    <recommendedName>
        <fullName evidence="1">Aromatic amino acid aminotransferase</fullName>
        <shortName evidence="1">ArAT</shortName>
        <ecNumber evidence="1">2.6.1.57</ecNumber>
    </recommendedName>
</protein>
<evidence type="ECO:0000255" key="1">
    <source>
        <dbReference type="HAMAP-Rule" id="MF_01513"/>
    </source>
</evidence>
<name>PATR_CUTAK</name>
<dbReference type="EC" id="2.6.1.57" evidence="1"/>
<dbReference type="EMBL" id="AE017283">
    <property type="protein sequence ID" value="AAT81796.1"/>
    <property type="molecule type" value="Genomic_DNA"/>
</dbReference>
<dbReference type="SMR" id="Q6ABU3"/>
<dbReference type="EnsemblBacteria" id="AAT81796">
    <property type="protein sequence ID" value="AAT81796"/>
    <property type="gene ID" value="PPA0034"/>
</dbReference>
<dbReference type="KEGG" id="pac:PPA0034"/>
<dbReference type="eggNOG" id="COG0079">
    <property type="taxonomic scope" value="Bacteria"/>
</dbReference>
<dbReference type="HOGENOM" id="CLU_017584_3_3_11"/>
<dbReference type="Proteomes" id="UP000000603">
    <property type="component" value="Chromosome"/>
</dbReference>
<dbReference type="GO" id="GO:0008793">
    <property type="term" value="F:aromatic-amino-acid transaminase activity"/>
    <property type="evidence" value="ECO:0007669"/>
    <property type="project" value="UniProtKB-UniRule"/>
</dbReference>
<dbReference type="GO" id="GO:0004400">
    <property type="term" value="F:histidinol-phosphate transaminase activity"/>
    <property type="evidence" value="ECO:0007669"/>
    <property type="project" value="InterPro"/>
</dbReference>
<dbReference type="GO" id="GO:0030170">
    <property type="term" value="F:pyridoxal phosphate binding"/>
    <property type="evidence" value="ECO:0007669"/>
    <property type="project" value="UniProtKB-UniRule"/>
</dbReference>
<dbReference type="GO" id="GO:0000105">
    <property type="term" value="P:L-histidine biosynthetic process"/>
    <property type="evidence" value="ECO:0007669"/>
    <property type="project" value="InterPro"/>
</dbReference>
<dbReference type="CDD" id="cd00609">
    <property type="entry name" value="AAT_like"/>
    <property type="match status" value="1"/>
</dbReference>
<dbReference type="Gene3D" id="3.90.1150.10">
    <property type="entry name" value="Aspartate Aminotransferase, domain 1"/>
    <property type="match status" value="1"/>
</dbReference>
<dbReference type="Gene3D" id="3.40.640.10">
    <property type="entry name" value="Type I PLP-dependent aspartate aminotransferase-like (Major domain)"/>
    <property type="match status" value="1"/>
</dbReference>
<dbReference type="HAMAP" id="MF_01023">
    <property type="entry name" value="HisC_aminotrans_2"/>
    <property type="match status" value="1"/>
</dbReference>
<dbReference type="HAMAP" id="MF_01513">
    <property type="entry name" value="Phe_aminotrans_2"/>
    <property type="match status" value="1"/>
</dbReference>
<dbReference type="InterPro" id="IPR001917">
    <property type="entry name" value="Aminotrans_II_pyridoxalP_BS"/>
</dbReference>
<dbReference type="InterPro" id="IPR004839">
    <property type="entry name" value="Aminotransferase_I/II_large"/>
</dbReference>
<dbReference type="InterPro" id="IPR024892">
    <property type="entry name" value="ArAT"/>
</dbReference>
<dbReference type="InterPro" id="IPR005861">
    <property type="entry name" value="HisP_aminotrans"/>
</dbReference>
<dbReference type="InterPro" id="IPR050106">
    <property type="entry name" value="HistidinolP_aminotransfase"/>
</dbReference>
<dbReference type="InterPro" id="IPR015424">
    <property type="entry name" value="PyrdxlP-dep_Trfase"/>
</dbReference>
<dbReference type="InterPro" id="IPR015421">
    <property type="entry name" value="PyrdxlP-dep_Trfase_major"/>
</dbReference>
<dbReference type="InterPro" id="IPR015422">
    <property type="entry name" value="PyrdxlP-dep_Trfase_small"/>
</dbReference>
<dbReference type="NCBIfam" id="TIGR01141">
    <property type="entry name" value="hisC"/>
    <property type="match status" value="1"/>
</dbReference>
<dbReference type="NCBIfam" id="NF002878">
    <property type="entry name" value="PRK03321.1"/>
    <property type="match status" value="1"/>
</dbReference>
<dbReference type="PANTHER" id="PTHR43643:SF3">
    <property type="entry name" value="HISTIDINOL-PHOSPHATE AMINOTRANSFERASE"/>
    <property type="match status" value="1"/>
</dbReference>
<dbReference type="PANTHER" id="PTHR43643">
    <property type="entry name" value="HISTIDINOL-PHOSPHATE AMINOTRANSFERASE 2"/>
    <property type="match status" value="1"/>
</dbReference>
<dbReference type="Pfam" id="PF00155">
    <property type="entry name" value="Aminotran_1_2"/>
    <property type="match status" value="1"/>
</dbReference>
<dbReference type="SUPFAM" id="SSF53383">
    <property type="entry name" value="PLP-dependent transferases"/>
    <property type="match status" value="1"/>
</dbReference>
<dbReference type="PROSITE" id="PS00599">
    <property type="entry name" value="AA_TRANSFER_CLASS_2"/>
    <property type="match status" value="1"/>
</dbReference>
<comment type="function">
    <text evidence="1">Aminotransferase that catalyzes the conversion of aromatic amino acids and 2-oxoglutarate into corresponding aromatic oxo acids and L-glutamate.</text>
</comment>
<comment type="catalytic activity">
    <reaction evidence="1">
        <text>an aromatic L-alpha-amino acid + 2-oxoglutarate = an aromatic oxo-acid + L-glutamate</text>
        <dbReference type="Rhea" id="RHEA:17533"/>
        <dbReference type="ChEBI" id="CHEBI:16810"/>
        <dbReference type="ChEBI" id="CHEBI:29985"/>
        <dbReference type="ChEBI" id="CHEBI:73309"/>
        <dbReference type="ChEBI" id="CHEBI:84824"/>
        <dbReference type="EC" id="2.6.1.57"/>
    </reaction>
</comment>
<comment type="cofactor">
    <cofactor evidence="1">
        <name>pyridoxal 5'-phosphate</name>
        <dbReference type="ChEBI" id="CHEBI:597326"/>
    </cofactor>
</comment>
<comment type="subunit">
    <text evidence="1">Homodimer.</text>
</comment>
<comment type="similarity">
    <text evidence="1">Belongs to the class-II pyridoxal-phosphate-dependent aminotransferase family.</text>
</comment>
<accession>Q6ABU3</accession>
<gene>
    <name evidence="1" type="primary">pat</name>
    <name type="ordered locus">PPA0034</name>
</gene>
<reference key="1">
    <citation type="journal article" date="2004" name="Science">
        <title>The complete genome sequence of Propionibacterium acnes, a commensal of human skin.</title>
        <authorList>
            <person name="Brueggemann H."/>
            <person name="Henne A."/>
            <person name="Hoster F."/>
            <person name="Liesegang H."/>
            <person name="Wiezer A."/>
            <person name="Strittmatter A."/>
            <person name="Hujer S."/>
            <person name="Duerre P."/>
            <person name="Gottschalk G."/>
        </authorList>
    </citation>
    <scope>NUCLEOTIDE SEQUENCE [LARGE SCALE GENOMIC DNA]</scope>
    <source>
        <strain>DSM 16379 / KPA171202</strain>
    </source>
</reference>
<keyword id="KW-0032">Aminotransferase</keyword>
<keyword id="KW-0663">Pyridoxal phosphate</keyword>
<keyword id="KW-0808">Transferase</keyword>
<proteinExistence type="inferred from homology"/>
<sequence>MSQDRRDVVRGLPLYKQGASHGENAVKLSSNENPFEPLPSVVEAVTRTLPRFNRYPLMSAEEVRSTIAGHFGVDVSQVAVGAGSTEVASQLMHALAGAGDEIIFPWRSFEAYPILTKVAGATPIPVPLTVDLRHDLDAMADAITDRTRVIFLCTPNNPTGTVLHTDEVVEFLARVPENVVVVMDEAYCHFNRDDAAVDGLTLLEDHPNVVVLRTFSKAYGLAGLRIGFAISTPEISDDLRRVATPFTVTTLAQQAAIASLAAEDELNERVNRIVAERTRVFDELTRQGWKIVPSQANFLWLATGDDTDRIDEVMVSHGVFARCWSEEGIRLSIGLDAENDRAIEALSQAVKG</sequence>
<organism>
    <name type="scientific">Cutibacterium acnes (strain DSM 16379 / KPA171202)</name>
    <name type="common">Propionibacterium acnes</name>
    <dbReference type="NCBI Taxonomy" id="267747"/>
    <lineage>
        <taxon>Bacteria</taxon>
        <taxon>Bacillati</taxon>
        <taxon>Actinomycetota</taxon>
        <taxon>Actinomycetes</taxon>
        <taxon>Propionibacteriales</taxon>
        <taxon>Propionibacteriaceae</taxon>
        <taxon>Cutibacterium</taxon>
    </lineage>
</organism>
<feature type="chain" id="PRO_0000153519" description="Aromatic amino acid aminotransferase">
    <location>
        <begin position="1"/>
        <end position="352"/>
    </location>
</feature>
<feature type="modified residue" description="N6-(pyridoxal phosphate)lysine" evidence="1">
    <location>
        <position position="217"/>
    </location>
</feature>